<organism>
    <name type="scientific">Saccharolobus solfataricus (strain ATCC 35092 / DSM 1617 / JCM 11322 / P2)</name>
    <name type="common">Sulfolobus solfataricus</name>
    <dbReference type="NCBI Taxonomy" id="273057"/>
    <lineage>
        <taxon>Archaea</taxon>
        <taxon>Thermoproteota</taxon>
        <taxon>Thermoprotei</taxon>
        <taxon>Sulfolobales</taxon>
        <taxon>Sulfolobaceae</taxon>
        <taxon>Saccharolobus</taxon>
    </lineage>
</organism>
<protein>
    <recommendedName>
        <fullName>Threonine--tRNA ligase catalytic subunit</fullName>
        <ecNumber>6.1.1.3</ecNumber>
    </recommendedName>
    <alternativeName>
        <fullName evidence="5">Threonyl-tRNA synthetase catalytic subunit</fullName>
        <shortName evidence="5">ThrRS-cat</shortName>
    </alternativeName>
</protein>
<accession>Q97VW8</accession>
<reference key="1">
    <citation type="journal article" date="2001" name="Proc. Natl. Acad. Sci. U.S.A.">
        <title>The complete genome of the crenarchaeon Sulfolobus solfataricus P2.</title>
        <authorList>
            <person name="She Q."/>
            <person name="Singh R.K."/>
            <person name="Confalonieri F."/>
            <person name="Zivanovic Y."/>
            <person name="Allard G."/>
            <person name="Awayez M.J."/>
            <person name="Chan-Weiher C.C.-Y."/>
            <person name="Clausen I.G."/>
            <person name="Curtis B.A."/>
            <person name="De Moors A."/>
            <person name="Erauso G."/>
            <person name="Fletcher C."/>
            <person name="Gordon P.M.K."/>
            <person name="Heikamp-de Jong I."/>
            <person name="Jeffries A.C."/>
            <person name="Kozera C.J."/>
            <person name="Medina N."/>
            <person name="Peng X."/>
            <person name="Thi-Ngoc H.P."/>
            <person name="Redder P."/>
            <person name="Schenk M.E."/>
            <person name="Theriault C."/>
            <person name="Tolstrup N."/>
            <person name="Charlebois R.L."/>
            <person name="Doolittle W.F."/>
            <person name="Duguet M."/>
            <person name="Gaasterland T."/>
            <person name="Garrett R.A."/>
            <person name="Ragan M.A."/>
            <person name="Sensen C.W."/>
            <person name="Van der Oost J."/>
        </authorList>
    </citation>
    <scope>NUCLEOTIDE SEQUENCE [LARGE SCALE GENOMIC DNA]</scope>
    <source>
        <strain>ATCC 35092 / DSM 1617 / JCM 11322 / P2</strain>
    </source>
</reference>
<reference key="2">
    <citation type="journal article" date="2004" name="Proc. Natl. Acad. Sci. U.S.A.">
        <title>A freestanding proofreading domain is required for protein synthesis quality control in Archaea.</title>
        <authorList>
            <person name="Korencic D."/>
            <person name="Ahel I."/>
            <person name="Schelert J."/>
            <person name="Sacher M."/>
            <person name="Ruan B."/>
            <person name="Stathopoulos C."/>
            <person name="Blum P."/>
            <person name="Ibba M."/>
            <person name="Soell D."/>
        </authorList>
    </citation>
    <scope>FUNCTION</scope>
    <scope>BIOPHYSICOCHEMICAL PROPERTIES</scope>
    <scope>SUBUNIT</scope>
    <source>
        <strain>ATCC 35092 / DSM 1617 / JCM 11322 / P2</strain>
    </source>
</reference>
<reference key="3">
    <citation type="journal article" date="2005" name="J. Biol. Chem.">
        <title>A unique hydrophobic cluster near the active site contributes to differences in borrelidin inhibition among threonyl-tRNA synthetases.</title>
        <authorList>
            <person name="Ruan B."/>
            <person name="Bovee M.L."/>
            <person name="Sacher M."/>
            <person name="Stathopoulos C."/>
            <person name="Poralla K."/>
            <person name="Francklyn C.S."/>
            <person name="Soell D."/>
        </authorList>
    </citation>
    <scope>FUNCTION</scope>
    <scope>ACTIVITY REGULATION</scope>
    <scope>BIOPHYSICOCHEMICAL PROPERTIES</scope>
</reference>
<name>SYTC_SACS2</name>
<evidence type="ECO:0000250" key="1">
    <source>
        <dbReference type="UniProtKB" id="Q9YDW0"/>
    </source>
</evidence>
<evidence type="ECO:0000255" key="2">
    <source>
        <dbReference type="HAMAP-Rule" id="MF_00184"/>
    </source>
</evidence>
<evidence type="ECO:0000269" key="3">
    <source>
    </source>
</evidence>
<evidence type="ECO:0000269" key="4">
    <source>
    </source>
</evidence>
<evidence type="ECO:0000303" key="5">
    <source>
    </source>
</evidence>
<evidence type="ECO:0000305" key="6">
    <source>
    </source>
</evidence>
<proteinExistence type="evidence at protein level"/>
<keyword id="KW-0030">Aminoacyl-tRNA synthetase</keyword>
<keyword id="KW-0067">ATP-binding</keyword>
<keyword id="KW-0963">Cytoplasm</keyword>
<keyword id="KW-0436">Ligase</keyword>
<keyword id="KW-0479">Metal-binding</keyword>
<keyword id="KW-0547">Nucleotide-binding</keyword>
<keyword id="KW-0648">Protein biosynthesis</keyword>
<keyword id="KW-1185">Reference proteome</keyword>
<keyword id="KW-0694">RNA-binding</keyword>
<keyword id="KW-0820">tRNA-binding</keyword>
<keyword id="KW-0862">Zinc</keyword>
<dbReference type="EC" id="6.1.1.3"/>
<dbReference type="EMBL" id="AE006641">
    <property type="protein sequence ID" value="AAK42622.1"/>
    <property type="molecule type" value="Genomic_DNA"/>
</dbReference>
<dbReference type="PIR" id="G90420">
    <property type="entry name" value="G90420"/>
</dbReference>
<dbReference type="RefSeq" id="WP_010923890.1">
    <property type="nucleotide sequence ID" value="NC_002754.1"/>
</dbReference>
<dbReference type="SMR" id="Q97VW8"/>
<dbReference type="FunCoup" id="Q97VW8">
    <property type="interactions" value="279"/>
</dbReference>
<dbReference type="STRING" id="273057.SSO2486"/>
<dbReference type="PaxDb" id="273057-SSO2486"/>
<dbReference type="EnsemblBacteria" id="AAK42622">
    <property type="protein sequence ID" value="AAK42622"/>
    <property type="gene ID" value="SSO2486"/>
</dbReference>
<dbReference type="GeneID" id="7808241"/>
<dbReference type="KEGG" id="sso:SSO2486"/>
<dbReference type="PATRIC" id="fig|273057.12.peg.2567"/>
<dbReference type="eggNOG" id="arCOG00401">
    <property type="taxonomic scope" value="Archaea"/>
</dbReference>
<dbReference type="HOGENOM" id="CLU_008554_0_1_2"/>
<dbReference type="InParanoid" id="Q97VW8"/>
<dbReference type="PhylomeDB" id="Q97VW8"/>
<dbReference type="Proteomes" id="UP000001974">
    <property type="component" value="Chromosome"/>
</dbReference>
<dbReference type="GO" id="GO:0005737">
    <property type="term" value="C:cytoplasm"/>
    <property type="evidence" value="ECO:0007669"/>
    <property type="project" value="UniProtKB-SubCell"/>
</dbReference>
<dbReference type="GO" id="GO:0005524">
    <property type="term" value="F:ATP binding"/>
    <property type="evidence" value="ECO:0007669"/>
    <property type="project" value="UniProtKB-UniRule"/>
</dbReference>
<dbReference type="GO" id="GO:0046872">
    <property type="term" value="F:metal ion binding"/>
    <property type="evidence" value="ECO:0007669"/>
    <property type="project" value="UniProtKB-KW"/>
</dbReference>
<dbReference type="GO" id="GO:0004829">
    <property type="term" value="F:threonine-tRNA ligase activity"/>
    <property type="evidence" value="ECO:0000314"/>
    <property type="project" value="UniProtKB"/>
</dbReference>
<dbReference type="GO" id="GO:0000049">
    <property type="term" value="F:tRNA binding"/>
    <property type="evidence" value="ECO:0007669"/>
    <property type="project" value="UniProtKB-KW"/>
</dbReference>
<dbReference type="GO" id="GO:0006435">
    <property type="term" value="P:threonyl-tRNA aminoacylation"/>
    <property type="evidence" value="ECO:0000314"/>
    <property type="project" value="UniProtKB"/>
</dbReference>
<dbReference type="CDD" id="cd00860">
    <property type="entry name" value="ThrRS_anticodon"/>
    <property type="match status" value="1"/>
</dbReference>
<dbReference type="CDD" id="cd00771">
    <property type="entry name" value="ThrRS_core"/>
    <property type="match status" value="1"/>
</dbReference>
<dbReference type="FunFam" id="3.30.930.10:FF:000002">
    <property type="entry name" value="Threonine--tRNA ligase"/>
    <property type="match status" value="1"/>
</dbReference>
<dbReference type="FunFam" id="3.40.50.800:FF:000001">
    <property type="entry name" value="Threonine--tRNA ligase"/>
    <property type="match status" value="1"/>
</dbReference>
<dbReference type="Gene3D" id="3.40.50.800">
    <property type="entry name" value="Anticodon-binding domain"/>
    <property type="match status" value="1"/>
</dbReference>
<dbReference type="Gene3D" id="3.30.930.10">
    <property type="entry name" value="Bira Bifunctional Protein, Domain 2"/>
    <property type="match status" value="1"/>
</dbReference>
<dbReference type="HAMAP" id="MF_00184">
    <property type="entry name" value="Thr_tRNA_synth"/>
    <property type="match status" value="1"/>
</dbReference>
<dbReference type="InterPro" id="IPR002314">
    <property type="entry name" value="aa-tRNA-synt_IIb"/>
</dbReference>
<dbReference type="InterPro" id="IPR006195">
    <property type="entry name" value="aa-tRNA-synth_II"/>
</dbReference>
<dbReference type="InterPro" id="IPR045864">
    <property type="entry name" value="aa-tRNA-synth_II/BPL/LPL"/>
</dbReference>
<dbReference type="InterPro" id="IPR004154">
    <property type="entry name" value="Anticodon-bd"/>
</dbReference>
<dbReference type="InterPro" id="IPR036621">
    <property type="entry name" value="Anticodon-bd_dom_sf"/>
</dbReference>
<dbReference type="InterPro" id="IPR002320">
    <property type="entry name" value="Thr-tRNA-ligase_IIa"/>
</dbReference>
<dbReference type="InterPro" id="IPR018163">
    <property type="entry name" value="Thr/Ala-tRNA-synth_IIc_edit"/>
</dbReference>
<dbReference type="InterPro" id="IPR047246">
    <property type="entry name" value="ThrRS_anticodon"/>
</dbReference>
<dbReference type="InterPro" id="IPR033728">
    <property type="entry name" value="ThrRS_core"/>
</dbReference>
<dbReference type="NCBIfam" id="TIGR00418">
    <property type="entry name" value="thrS"/>
    <property type="match status" value="1"/>
</dbReference>
<dbReference type="PANTHER" id="PTHR11451:SF44">
    <property type="entry name" value="THREONINE--TRNA LIGASE, CHLOROPLASTIC_MITOCHONDRIAL 2"/>
    <property type="match status" value="1"/>
</dbReference>
<dbReference type="PANTHER" id="PTHR11451">
    <property type="entry name" value="THREONINE-TRNA LIGASE"/>
    <property type="match status" value="1"/>
</dbReference>
<dbReference type="Pfam" id="PF03129">
    <property type="entry name" value="HGTP_anticodon"/>
    <property type="match status" value="1"/>
</dbReference>
<dbReference type="Pfam" id="PF00587">
    <property type="entry name" value="tRNA-synt_2b"/>
    <property type="match status" value="1"/>
</dbReference>
<dbReference type="PRINTS" id="PR01047">
    <property type="entry name" value="TRNASYNTHTHR"/>
</dbReference>
<dbReference type="SUPFAM" id="SSF52954">
    <property type="entry name" value="Class II aaRS ABD-related"/>
    <property type="match status" value="1"/>
</dbReference>
<dbReference type="SUPFAM" id="SSF55681">
    <property type="entry name" value="Class II aaRS and biotin synthetases"/>
    <property type="match status" value="1"/>
</dbReference>
<dbReference type="SUPFAM" id="SSF55186">
    <property type="entry name" value="ThrRS/AlaRS common domain"/>
    <property type="match status" value="1"/>
</dbReference>
<dbReference type="PROSITE" id="PS50862">
    <property type="entry name" value="AA_TRNA_LIGASE_II"/>
    <property type="match status" value="1"/>
</dbReference>
<feature type="chain" id="PRO_0000101113" description="Threonine--tRNA ligase catalytic subunit">
    <location>
        <begin position="1"/>
        <end position="545"/>
    </location>
</feature>
<feature type="region of interest" description="Catalytic" evidence="2">
    <location>
        <begin position="139"/>
        <end position="433"/>
    </location>
</feature>
<feature type="binding site" evidence="2">
    <location>
        <position position="231"/>
    </location>
    <ligand>
        <name>Zn(2+)</name>
        <dbReference type="ChEBI" id="CHEBI:29105"/>
    </ligand>
</feature>
<feature type="binding site" evidence="2">
    <location>
        <position position="282"/>
    </location>
    <ligand>
        <name>Zn(2+)</name>
        <dbReference type="ChEBI" id="CHEBI:29105"/>
    </ligand>
</feature>
<feature type="binding site" evidence="2">
    <location>
        <position position="410"/>
    </location>
    <ligand>
        <name>Zn(2+)</name>
        <dbReference type="ChEBI" id="CHEBI:29105"/>
    </ligand>
</feature>
<gene>
    <name evidence="5" type="primary">thrS-cat</name>
    <name type="ordered locus">SSO2486</name>
</gene>
<sequence>MESYKPVWLKGAVILAINLIDKGYKPVAVGLGERDFYIDVKSDTSITLDEVKKAINENVLANVSIENNQIVYKGNKVSIIEDKVSISTNLNPKYFEILNISTHHPNPNEQYVRIRGVAFETEEQLKDYLSWLEKAEETDHRLIGEKLDLFSFHEEAGSGLVLFHPKGQTIRNELIAFMREINDSMGYQEVYTSHVFKTDIWKISGHYTLYRDKLIVFNMEGDEYGVKPMNCPAHILIYKSKPRTYRDLPIRFSEFGHVYRWEKKGELYGLLRVRGFVQDDGHIFLREDQLREEIKMLISKTVEVWHKFGFKDDDIKPYLSTRPDESIGSDELWEKATNALISALQESGLKFGIKEKEGAFYGPKIDFEIRDSLGRWWQLSTIQVDFNLPERFKLEYIDKDGIKKRPVMVHRAIYGSIDRFVAILLEHFKGKLPTWLSSVQVRVLPITDEVNEYAEKVLNDMRKRRIRAEIDYAGETLSKRIKNAYDQGVPYILIVGKKEASEGTVTVRARGNIEVRNVKFEKFLELLITEIAQRDVEQTTVKALK</sequence>
<comment type="function">
    <text evidence="3">Catalyzes the attachment of threonine to tRNA(Thr) in a two-step reaction: L-threonine is first activated by ATP to form Thr-AMP and then transferred to the acceptor end of tRNA(Thr) (PubMed:15240874). Also activates L-serine and transfers it to tRNA(Thr); unlike most archaea the editing function is found in a freestanding protein (ACQ980D1) (PubMed:15240874). In vitro when both subunits are present, or if the 2 subunits are fused, L-seryl-tRNA(Thr) is no longer produced, the 2 subunits edit incorrectly charged L-seryl-tRNA(Thr) (PubMed:15240874). Has no activity on correctly acylated L-seryl-tRNA(Ser) or L-threonyl-tRNA(Thr).</text>
</comment>
<comment type="catalytic activity">
    <reaction evidence="2">
        <text>tRNA(Thr) + L-threonine + ATP = L-threonyl-tRNA(Thr) + AMP + diphosphate + H(+)</text>
        <dbReference type="Rhea" id="RHEA:24624"/>
        <dbReference type="Rhea" id="RHEA-COMP:9670"/>
        <dbReference type="Rhea" id="RHEA-COMP:9704"/>
        <dbReference type="ChEBI" id="CHEBI:15378"/>
        <dbReference type="ChEBI" id="CHEBI:30616"/>
        <dbReference type="ChEBI" id="CHEBI:33019"/>
        <dbReference type="ChEBI" id="CHEBI:57926"/>
        <dbReference type="ChEBI" id="CHEBI:78442"/>
        <dbReference type="ChEBI" id="CHEBI:78534"/>
        <dbReference type="ChEBI" id="CHEBI:456215"/>
        <dbReference type="EC" id="6.1.1.3"/>
    </reaction>
</comment>
<comment type="cofactor">
    <cofactor evidence="2">
        <name>Zn(2+)</name>
        <dbReference type="ChEBI" id="CHEBI:29105"/>
    </cofactor>
    <text evidence="2">Binds 1 zinc ion per subunit.</text>
</comment>
<comment type="activity regulation">
    <text evidence="4">Inhibited by 1 uM borrelidin (BN).</text>
</comment>
<comment type="biophysicochemical properties">
    <kinetics>
        <KM evidence="3">55 mM for L-serine activation</KM>
        <KM evidence="3">0.11 mM for L-threonine activation</KM>
        <KM evidence="4">100 uM for L-threonine activation</KM>
        <text evidence="3">kcat is 1.3 sec(-1) for L-serine, 1.9 for L-threonine at 60 degrees Celsius (PubMed:15240874).</text>
    </kinetics>
</comment>
<comment type="subunit">
    <text evidence="1 6">Homodimer (By similarity). Probably interacts with its editing subunit (AC Q980D1); a subunit fusion (in the order edit-catalytic) is fully functional.</text>
</comment>
<comment type="subcellular location">
    <subcellularLocation>
        <location evidence="2">Cytoplasm</location>
    </subcellularLocation>
</comment>
<comment type="similarity">
    <text evidence="2">Belongs to the class-II aminoacyl-tRNA synthetase family.</text>
</comment>